<proteinExistence type="inferred from homology"/>
<accession>C1CBL5</accession>
<dbReference type="EC" id="2.1.1.177" evidence="1"/>
<dbReference type="EMBL" id="CP000918">
    <property type="protein sequence ID" value="ACO16904.1"/>
    <property type="molecule type" value="Genomic_DNA"/>
</dbReference>
<dbReference type="RefSeq" id="WP_000695929.1">
    <property type="nucleotide sequence ID" value="NC_012468.1"/>
</dbReference>
<dbReference type="SMR" id="C1CBL5"/>
<dbReference type="GeneID" id="45652538"/>
<dbReference type="KEGG" id="snm:SP70585_2368"/>
<dbReference type="HOGENOM" id="CLU_100552_0_0_9"/>
<dbReference type="Proteomes" id="UP000002211">
    <property type="component" value="Chromosome"/>
</dbReference>
<dbReference type="GO" id="GO:0005737">
    <property type="term" value="C:cytoplasm"/>
    <property type="evidence" value="ECO:0007669"/>
    <property type="project" value="UniProtKB-SubCell"/>
</dbReference>
<dbReference type="GO" id="GO:0070038">
    <property type="term" value="F:rRNA (pseudouridine-N3-)-methyltransferase activity"/>
    <property type="evidence" value="ECO:0007669"/>
    <property type="project" value="UniProtKB-UniRule"/>
</dbReference>
<dbReference type="CDD" id="cd18081">
    <property type="entry name" value="RlmH-like"/>
    <property type="match status" value="1"/>
</dbReference>
<dbReference type="Gene3D" id="3.40.1280.10">
    <property type="match status" value="1"/>
</dbReference>
<dbReference type="HAMAP" id="MF_00658">
    <property type="entry name" value="23SrRNA_methyltr_H"/>
    <property type="match status" value="1"/>
</dbReference>
<dbReference type="InterPro" id="IPR029028">
    <property type="entry name" value="Alpha/beta_knot_MTases"/>
</dbReference>
<dbReference type="InterPro" id="IPR003742">
    <property type="entry name" value="RlmH-like"/>
</dbReference>
<dbReference type="InterPro" id="IPR029026">
    <property type="entry name" value="tRNA_m1G_MTases_N"/>
</dbReference>
<dbReference type="NCBIfam" id="NF000985">
    <property type="entry name" value="PRK00103.1-3"/>
    <property type="match status" value="1"/>
</dbReference>
<dbReference type="NCBIfam" id="TIGR00246">
    <property type="entry name" value="tRNA_RlmH_YbeA"/>
    <property type="match status" value="1"/>
</dbReference>
<dbReference type="PANTHER" id="PTHR33603">
    <property type="entry name" value="METHYLTRANSFERASE"/>
    <property type="match status" value="1"/>
</dbReference>
<dbReference type="PANTHER" id="PTHR33603:SF1">
    <property type="entry name" value="RIBOSOMAL RNA LARGE SUBUNIT METHYLTRANSFERASE H"/>
    <property type="match status" value="1"/>
</dbReference>
<dbReference type="Pfam" id="PF02590">
    <property type="entry name" value="SPOUT_MTase"/>
    <property type="match status" value="1"/>
</dbReference>
<dbReference type="PIRSF" id="PIRSF004505">
    <property type="entry name" value="MT_bac"/>
    <property type="match status" value="1"/>
</dbReference>
<dbReference type="SUPFAM" id="SSF75217">
    <property type="entry name" value="alpha/beta knot"/>
    <property type="match status" value="1"/>
</dbReference>
<keyword id="KW-0963">Cytoplasm</keyword>
<keyword id="KW-0489">Methyltransferase</keyword>
<keyword id="KW-0698">rRNA processing</keyword>
<keyword id="KW-0949">S-adenosyl-L-methionine</keyword>
<keyword id="KW-0808">Transferase</keyword>
<sequence>MKIKVVTVGKLKEKYLKDGIAEYSKRISRFAKFEMIELSDEKTPDKASESENQKILEIEGQRILSKIADRDFVIVLAIEGKTFFSEEFSKQLEETSIKGFSTLTFIIGGSLGLSSSVKNRANLSVSFGRLTLPHQLMRLVLVEQIYRAFTIQQGFPYHK</sequence>
<comment type="function">
    <text evidence="1">Specifically methylates the pseudouridine at position 1915 (m3Psi1915) in 23S rRNA.</text>
</comment>
<comment type="catalytic activity">
    <reaction evidence="1">
        <text>pseudouridine(1915) in 23S rRNA + S-adenosyl-L-methionine = N(3)-methylpseudouridine(1915) in 23S rRNA + S-adenosyl-L-homocysteine + H(+)</text>
        <dbReference type="Rhea" id="RHEA:42752"/>
        <dbReference type="Rhea" id="RHEA-COMP:10221"/>
        <dbReference type="Rhea" id="RHEA-COMP:10222"/>
        <dbReference type="ChEBI" id="CHEBI:15378"/>
        <dbReference type="ChEBI" id="CHEBI:57856"/>
        <dbReference type="ChEBI" id="CHEBI:59789"/>
        <dbReference type="ChEBI" id="CHEBI:65314"/>
        <dbReference type="ChEBI" id="CHEBI:74486"/>
        <dbReference type="EC" id="2.1.1.177"/>
    </reaction>
</comment>
<comment type="subunit">
    <text evidence="1">Homodimer.</text>
</comment>
<comment type="subcellular location">
    <subcellularLocation>
        <location evidence="1">Cytoplasm</location>
    </subcellularLocation>
</comment>
<comment type="similarity">
    <text evidence="1">Belongs to the RNA methyltransferase RlmH family.</text>
</comment>
<protein>
    <recommendedName>
        <fullName evidence="1">Ribosomal RNA large subunit methyltransferase H</fullName>
        <ecNumber evidence="1">2.1.1.177</ecNumber>
    </recommendedName>
    <alternativeName>
        <fullName evidence="1">23S rRNA (pseudouridine1915-N3)-methyltransferase</fullName>
    </alternativeName>
    <alternativeName>
        <fullName evidence="1">23S rRNA m3Psi1915 methyltransferase</fullName>
    </alternativeName>
    <alternativeName>
        <fullName evidence="1">rRNA (pseudouridine-N3-)-methyltransferase RlmH</fullName>
    </alternativeName>
</protein>
<gene>
    <name evidence="1" type="primary">rlmH</name>
    <name type="ordered locus">SP70585_2368</name>
</gene>
<organism>
    <name type="scientific">Streptococcus pneumoniae (strain 70585)</name>
    <dbReference type="NCBI Taxonomy" id="488221"/>
    <lineage>
        <taxon>Bacteria</taxon>
        <taxon>Bacillati</taxon>
        <taxon>Bacillota</taxon>
        <taxon>Bacilli</taxon>
        <taxon>Lactobacillales</taxon>
        <taxon>Streptococcaceae</taxon>
        <taxon>Streptococcus</taxon>
    </lineage>
</organism>
<name>RLMH_STRP7</name>
<reference key="1">
    <citation type="journal article" date="2010" name="Genome Biol.">
        <title>Structure and dynamics of the pan-genome of Streptococcus pneumoniae and closely related species.</title>
        <authorList>
            <person name="Donati C."/>
            <person name="Hiller N.L."/>
            <person name="Tettelin H."/>
            <person name="Muzzi A."/>
            <person name="Croucher N.J."/>
            <person name="Angiuoli S.V."/>
            <person name="Oggioni M."/>
            <person name="Dunning Hotopp J.C."/>
            <person name="Hu F.Z."/>
            <person name="Riley D.R."/>
            <person name="Covacci A."/>
            <person name="Mitchell T.J."/>
            <person name="Bentley S.D."/>
            <person name="Kilian M."/>
            <person name="Ehrlich G.D."/>
            <person name="Rappuoli R."/>
            <person name="Moxon E.R."/>
            <person name="Masignani V."/>
        </authorList>
    </citation>
    <scope>NUCLEOTIDE SEQUENCE [LARGE SCALE GENOMIC DNA]</scope>
    <source>
        <strain>70585</strain>
    </source>
</reference>
<feature type="chain" id="PRO_1000199831" description="Ribosomal RNA large subunit methyltransferase H">
    <location>
        <begin position="1"/>
        <end position="159"/>
    </location>
</feature>
<feature type="binding site" evidence="1">
    <location>
        <position position="76"/>
    </location>
    <ligand>
        <name>S-adenosyl-L-methionine</name>
        <dbReference type="ChEBI" id="CHEBI:59789"/>
    </ligand>
</feature>
<feature type="binding site" evidence="1">
    <location>
        <position position="108"/>
    </location>
    <ligand>
        <name>S-adenosyl-L-methionine</name>
        <dbReference type="ChEBI" id="CHEBI:59789"/>
    </ligand>
</feature>
<feature type="binding site" evidence="1">
    <location>
        <begin position="127"/>
        <end position="132"/>
    </location>
    <ligand>
        <name>S-adenosyl-L-methionine</name>
        <dbReference type="ChEBI" id="CHEBI:59789"/>
    </ligand>
</feature>
<evidence type="ECO:0000255" key="1">
    <source>
        <dbReference type="HAMAP-Rule" id="MF_00658"/>
    </source>
</evidence>